<feature type="chain" id="PRO_0000211689" description="DNA gyrase inhibitor YacG">
    <location>
        <begin position="1"/>
        <end position="68"/>
    </location>
</feature>
<feature type="region of interest" description="Disordered" evidence="2">
    <location>
        <begin position="48"/>
        <end position="68"/>
    </location>
</feature>
<feature type="binding site" evidence="1">
    <location>
        <position position="12"/>
    </location>
    <ligand>
        <name>Zn(2+)</name>
        <dbReference type="ChEBI" id="CHEBI:29105"/>
    </ligand>
</feature>
<feature type="binding site" evidence="1">
    <location>
        <position position="15"/>
    </location>
    <ligand>
        <name>Zn(2+)</name>
        <dbReference type="ChEBI" id="CHEBI:29105"/>
    </ligand>
</feature>
<feature type="binding site" evidence="1">
    <location>
        <position position="30"/>
    </location>
    <ligand>
        <name>Zn(2+)</name>
        <dbReference type="ChEBI" id="CHEBI:29105"/>
    </ligand>
</feature>
<feature type="binding site" evidence="1">
    <location>
        <position position="34"/>
    </location>
    <ligand>
        <name>Zn(2+)</name>
        <dbReference type="ChEBI" id="CHEBI:29105"/>
    </ligand>
</feature>
<evidence type="ECO:0000255" key="1">
    <source>
        <dbReference type="HAMAP-Rule" id="MF_00649"/>
    </source>
</evidence>
<evidence type="ECO:0000256" key="2">
    <source>
        <dbReference type="SAM" id="MobiDB-lite"/>
    </source>
</evidence>
<comment type="function">
    <text evidence="1">Inhibits all the catalytic activities of DNA gyrase by preventing its interaction with DNA. Acts by binding directly to the C-terminal domain of GyrB, which probably disrupts DNA binding by the gyrase.</text>
</comment>
<comment type="cofactor">
    <cofactor evidence="1">
        <name>Zn(2+)</name>
        <dbReference type="ChEBI" id="CHEBI:29105"/>
    </cofactor>
    <text evidence="1">Binds 1 zinc ion.</text>
</comment>
<comment type="subunit">
    <text evidence="1">Interacts with GyrB.</text>
</comment>
<comment type="similarity">
    <text evidence="1">Belongs to the DNA gyrase inhibitor YacG family.</text>
</comment>
<organism>
    <name type="scientific">Acinetobacter baylyi (strain ATCC 33305 / BD413 / ADP1)</name>
    <dbReference type="NCBI Taxonomy" id="62977"/>
    <lineage>
        <taxon>Bacteria</taxon>
        <taxon>Pseudomonadati</taxon>
        <taxon>Pseudomonadota</taxon>
        <taxon>Gammaproteobacteria</taxon>
        <taxon>Moraxellales</taxon>
        <taxon>Moraxellaceae</taxon>
        <taxon>Acinetobacter</taxon>
    </lineage>
</organism>
<dbReference type="EMBL" id="CR543861">
    <property type="protein sequence ID" value="CAG67362.1"/>
    <property type="molecule type" value="Genomic_DNA"/>
</dbReference>
<dbReference type="SMR" id="Q6FEZ6"/>
<dbReference type="STRING" id="202950.GCA_001485005_00675"/>
<dbReference type="KEGG" id="aci:ACIAD0419"/>
<dbReference type="eggNOG" id="COG3024">
    <property type="taxonomic scope" value="Bacteria"/>
</dbReference>
<dbReference type="HOGENOM" id="CLU_178280_3_2_6"/>
<dbReference type="Proteomes" id="UP000000430">
    <property type="component" value="Chromosome"/>
</dbReference>
<dbReference type="GO" id="GO:0008657">
    <property type="term" value="F:DNA topoisomerase type II (double strand cut, ATP-hydrolyzing) inhibitor activity"/>
    <property type="evidence" value="ECO:0007669"/>
    <property type="project" value="UniProtKB-UniRule"/>
</dbReference>
<dbReference type="GO" id="GO:0008270">
    <property type="term" value="F:zinc ion binding"/>
    <property type="evidence" value="ECO:0007669"/>
    <property type="project" value="UniProtKB-UniRule"/>
</dbReference>
<dbReference type="GO" id="GO:0006355">
    <property type="term" value="P:regulation of DNA-templated transcription"/>
    <property type="evidence" value="ECO:0007669"/>
    <property type="project" value="InterPro"/>
</dbReference>
<dbReference type="Gene3D" id="3.30.50.10">
    <property type="entry name" value="Erythroid Transcription Factor GATA-1, subunit A"/>
    <property type="match status" value="1"/>
</dbReference>
<dbReference type="HAMAP" id="MF_00649">
    <property type="entry name" value="DNA_gyrase_inhibitor_YacG"/>
    <property type="match status" value="1"/>
</dbReference>
<dbReference type="InterPro" id="IPR005584">
    <property type="entry name" value="DNA_gyrase_inhibitor_YacG"/>
</dbReference>
<dbReference type="InterPro" id="IPR013088">
    <property type="entry name" value="Znf_NHR/GATA"/>
</dbReference>
<dbReference type="PANTHER" id="PTHR36150">
    <property type="entry name" value="DNA GYRASE INHIBITOR YACG"/>
    <property type="match status" value="1"/>
</dbReference>
<dbReference type="PANTHER" id="PTHR36150:SF1">
    <property type="entry name" value="DNA GYRASE INHIBITOR YACG"/>
    <property type="match status" value="1"/>
</dbReference>
<dbReference type="Pfam" id="PF03884">
    <property type="entry name" value="YacG"/>
    <property type="match status" value="1"/>
</dbReference>
<dbReference type="SUPFAM" id="SSF57716">
    <property type="entry name" value="Glucocorticoid receptor-like (DNA-binding domain)"/>
    <property type="match status" value="1"/>
</dbReference>
<reference key="1">
    <citation type="journal article" date="2004" name="Nucleic Acids Res.">
        <title>Unique features revealed by the genome sequence of Acinetobacter sp. ADP1, a versatile and naturally transformation competent bacterium.</title>
        <authorList>
            <person name="Barbe V."/>
            <person name="Vallenet D."/>
            <person name="Fonknechten N."/>
            <person name="Kreimeyer A."/>
            <person name="Oztas S."/>
            <person name="Labarre L."/>
            <person name="Cruveiller S."/>
            <person name="Robert C."/>
            <person name="Duprat S."/>
            <person name="Wincker P."/>
            <person name="Ornston L.N."/>
            <person name="Weissenbach J."/>
            <person name="Marliere P."/>
            <person name="Cohen G.N."/>
            <person name="Medigue C."/>
        </authorList>
    </citation>
    <scope>NUCLEOTIDE SEQUENCE [LARGE SCALE GENOMIC DNA]</scope>
    <source>
        <strain>ATCC 33305 / BD413 / ADP1</strain>
    </source>
</reference>
<keyword id="KW-0479">Metal-binding</keyword>
<keyword id="KW-0862">Zinc</keyword>
<proteinExistence type="inferred from homology"/>
<sequence length="68" mass="7772">MKDFIMPRTFPCPRCGQPSVWEGNESRPFCSERCKLIDLGAWASEEYKLKTQDAPTSGKGQHSDDYED</sequence>
<gene>
    <name evidence="1" type="primary">yacG</name>
    <name type="ordered locus">ACIAD0419</name>
</gene>
<name>YACG_ACIAD</name>
<accession>Q6FEZ6</accession>
<protein>
    <recommendedName>
        <fullName evidence="1">DNA gyrase inhibitor YacG</fullName>
    </recommendedName>
</protein>